<organism>
    <name type="scientific">Isodontia harmandi</name>
    <name type="common">Grass-carrying wasp</name>
    <dbReference type="NCBI Taxonomy" id="2838365"/>
    <lineage>
        <taxon>Eukaryota</taxon>
        <taxon>Metazoa</taxon>
        <taxon>Ecdysozoa</taxon>
        <taxon>Arthropoda</taxon>
        <taxon>Hexapoda</taxon>
        <taxon>Insecta</taxon>
        <taxon>Pterygota</taxon>
        <taxon>Neoptera</taxon>
        <taxon>Endopterygota</taxon>
        <taxon>Hymenoptera</taxon>
        <taxon>Apocrita</taxon>
        <taxon>Aculeata</taxon>
        <taxon>Apoidea</taxon>
        <taxon>Sphecidae</taxon>
        <taxon>Sphecinae</taxon>
        <taxon>Sphecina</taxon>
        <taxon>Isodontia</taxon>
    </lineage>
</organism>
<evidence type="ECO:0000269" key="1">
    <source>
    </source>
</evidence>
<evidence type="ECO:0000303" key="2">
    <source>
    </source>
</evidence>
<evidence type="ECO:0000305" key="3"/>
<evidence type="ECO:0000305" key="4">
    <source>
    </source>
</evidence>
<name>VP41_ISOHA</name>
<accession>P0DUU8</accession>
<reference key="1">
    <citation type="journal article" date="2021" name="Peptides">
        <title>Isolation and characterization of FMRFamide-like peptides in the venoms of solitary sphecid wasps.</title>
        <authorList>
            <person name="Nihei K.I."/>
            <person name="Peigneur S."/>
            <person name="Tytgat J."/>
            <person name="Lange A.B."/>
            <person name="Konno K."/>
        </authorList>
    </citation>
    <scope>PROTEIN SEQUENCE</scope>
    <scope>SUBCELLULAR LOCATION</scope>
    <scope>MASS SPECTROMETRY</scope>
    <source>
        <tissue>Venom</tissue>
    </source>
</reference>
<proteinExistence type="evidence at protein level"/>
<feature type="peptide" id="PRO_0000453647" description="Venom peptide Sh41" evidence="1">
    <location>
        <begin position="1"/>
        <end position="10"/>
    </location>
</feature>
<keyword id="KW-0903">Direct protein sequencing</keyword>
<keyword id="KW-0964">Secreted</keyword>
<protein>
    <recommendedName>
        <fullName evidence="2">Venom peptide Sh41</fullName>
    </recommendedName>
</protein>
<dbReference type="GO" id="GO:0005576">
    <property type="term" value="C:extracellular region"/>
    <property type="evidence" value="ECO:0007669"/>
    <property type="project" value="UniProtKB-SubCell"/>
</dbReference>
<sequence>DDLSDFNPKV</sequence>
<comment type="subcellular location">
    <subcellularLocation>
        <location evidence="1">Secreted</location>
    </subcellularLocation>
</comment>
<comment type="tissue specificity">
    <text evidence="4">Expressed by the venom gland.</text>
</comment>
<comment type="mass spectrometry">
    <text>Monoisotopic mass.</text>
</comment>
<comment type="miscellaneous">
    <text evidence="1">Negative results: does not show activity on voltage-gated sodium channels, potassium channels, and calcium channels. All the following channels have been tested at 10 uM: Kv1.1/KCNA1, Kv1.2/KCNA2, Kv1.3/KCNA3, Kv1.4/KCNA4, Kv1.5/KCNA5, Kv1.6/KCNA6, Kv2.1/KCNB1, Kv3.1/KCNC1, Kv4.2/KCND2, Kv4.3/KCND3, Shaker IR, and Kv11.1/KCNH2/ERG1, as well as Nav1.2/SCN2A, Nav1.4/SCN4A, Nav1.5/SCN5A, Nav1.6/SCN8A, Nav1.8/SCN10A, and DmNav1, and the nicotinic acetylcholine receptor alpha-7 (CHRNA7).</text>
</comment>
<comment type="similarity">
    <text evidence="3">Belongs to the SA81-like family.</text>
</comment>